<protein>
    <recommendedName>
        <fullName>Putative flavin-containing monooxygenase FMO GS-OX-like 11</fullName>
        <ecNumber>1.8.-.-</ecNumber>
    </recommendedName>
    <alternativeName>
        <fullName>Putative flavin-monooxygenase glucosinolate S-oxygenase-like 11</fullName>
    </alternativeName>
</protein>
<dbReference type="EC" id="1.8.-.-"/>
<dbReference type="EMBL" id="AC008047">
    <property type="protein sequence ID" value="AAF19699.1"/>
    <property type="molecule type" value="Genomic_DNA"/>
</dbReference>
<dbReference type="EMBL" id="CP002684">
    <property type="protein sequence ID" value="AEE34094.2"/>
    <property type="molecule type" value="Genomic_DNA"/>
</dbReference>
<dbReference type="RefSeq" id="NP_001319303.1">
    <property type="nucleotide sequence ID" value="NM_001334089.1"/>
</dbReference>
<dbReference type="SMR" id="Q9SH25"/>
<dbReference type="STRING" id="3702.Q9SH25"/>
<dbReference type="EnsemblPlants" id="AT1G63390.1">
    <property type="protein sequence ID" value="AT1G63390.1"/>
    <property type="gene ID" value="AT1G63390"/>
</dbReference>
<dbReference type="GeneID" id="842645"/>
<dbReference type="Gramene" id="AT1G63390.1">
    <property type="protein sequence ID" value="AT1G63390.1"/>
    <property type="gene ID" value="AT1G63390"/>
</dbReference>
<dbReference type="KEGG" id="ath:AT1G63390"/>
<dbReference type="Araport" id="AT1G63390"/>
<dbReference type="TAIR" id="AT1G63390"/>
<dbReference type="InParanoid" id="Q9SH25"/>
<dbReference type="OMA" id="PASCHEE"/>
<dbReference type="Proteomes" id="UP000006548">
    <property type="component" value="Chromosome 1"/>
</dbReference>
<dbReference type="ExpressionAtlas" id="Q9SH25">
    <property type="expression patterns" value="baseline and differential"/>
</dbReference>
<dbReference type="GO" id="GO:0050660">
    <property type="term" value="F:flavin adenine dinucleotide binding"/>
    <property type="evidence" value="ECO:0007669"/>
    <property type="project" value="InterPro"/>
</dbReference>
<dbReference type="GO" id="GO:0004499">
    <property type="term" value="F:N,N-dimethylaniline monooxygenase activity"/>
    <property type="evidence" value="ECO:0007669"/>
    <property type="project" value="InterPro"/>
</dbReference>
<dbReference type="GO" id="GO:0050661">
    <property type="term" value="F:NADP binding"/>
    <property type="evidence" value="ECO:0007669"/>
    <property type="project" value="InterPro"/>
</dbReference>
<dbReference type="Gene3D" id="3.50.50.60">
    <property type="entry name" value="FAD/NAD(P)-binding domain"/>
    <property type="match status" value="1"/>
</dbReference>
<dbReference type="InterPro" id="IPR036188">
    <property type="entry name" value="FAD/NAD-bd_sf"/>
</dbReference>
<dbReference type="InterPro" id="IPR020946">
    <property type="entry name" value="Flavin_mOase-like"/>
</dbReference>
<dbReference type="InterPro" id="IPR050346">
    <property type="entry name" value="FMO-like"/>
</dbReference>
<dbReference type="PANTHER" id="PTHR23023">
    <property type="entry name" value="DIMETHYLANILINE MONOOXYGENASE"/>
    <property type="match status" value="1"/>
</dbReference>
<dbReference type="Pfam" id="PF00743">
    <property type="entry name" value="FMO-like"/>
    <property type="match status" value="1"/>
</dbReference>
<dbReference type="PRINTS" id="PR00419">
    <property type="entry name" value="ADXRDTASE"/>
</dbReference>
<dbReference type="SUPFAM" id="SSF51905">
    <property type="entry name" value="FAD/NAD(P)-binding domain"/>
    <property type="match status" value="1"/>
</dbReference>
<accession>Q9SH25</accession>
<accession>F4I229</accession>
<organism>
    <name type="scientific">Arabidopsis thaliana</name>
    <name type="common">Mouse-ear cress</name>
    <dbReference type="NCBI Taxonomy" id="3702"/>
    <lineage>
        <taxon>Eukaryota</taxon>
        <taxon>Viridiplantae</taxon>
        <taxon>Streptophyta</taxon>
        <taxon>Embryophyta</taxon>
        <taxon>Tracheophyta</taxon>
        <taxon>Spermatophyta</taxon>
        <taxon>Magnoliopsida</taxon>
        <taxon>eudicotyledons</taxon>
        <taxon>Gunneridae</taxon>
        <taxon>Pentapetalae</taxon>
        <taxon>rosids</taxon>
        <taxon>malvids</taxon>
        <taxon>Brassicales</taxon>
        <taxon>Brassicaceae</taxon>
        <taxon>Camelineae</taxon>
        <taxon>Arabidopsis</taxon>
    </lineage>
</organism>
<keyword id="KW-0274">FAD</keyword>
<keyword id="KW-0285">Flavoprotein</keyword>
<keyword id="KW-0503">Monooxygenase</keyword>
<keyword id="KW-0560">Oxidoreductase</keyword>
<keyword id="KW-1185">Reference proteome</keyword>
<evidence type="ECO:0000250" key="1"/>
<evidence type="ECO:0000255" key="2"/>
<evidence type="ECO:0000305" key="3"/>
<name>GSXLY_ARATH</name>
<gene>
    <name type="ordered locus">At1g63390</name>
    <name type="ORF">F2K11.23</name>
</gene>
<reference key="1">
    <citation type="journal article" date="2000" name="Nature">
        <title>Sequence and analysis of chromosome 1 of the plant Arabidopsis thaliana.</title>
        <authorList>
            <person name="Theologis A."/>
            <person name="Ecker J.R."/>
            <person name="Palm C.J."/>
            <person name="Federspiel N.A."/>
            <person name="Kaul S."/>
            <person name="White O."/>
            <person name="Alonso J."/>
            <person name="Altafi H."/>
            <person name="Araujo R."/>
            <person name="Bowman C.L."/>
            <person name="Brooks S.Y."/>
            <person name="Buehler E."/>
            <person name="Chan A."/>
            <person name="Chao Q."/>
            <person name="Chen H."/>
            <person name="Cheuk R.F."/>
            <person name="Chin C.W."/>
            <person name="Chung M.K."/>
            <person name="Conn L."/>
            <person name="Conway A.B."/>
            <person name="Conway A.R."/>
            <person name="Creasy T.H."/>
            <person name="Dewar K."/>
            <person name="Dunn P."/>
            <person name="Etgu P."/>
            <person name="Feldblyum T.V."/>
            <person name="Feng J.-D."/>
            <person name="Fong B."/>
            <person name="Fujii C.Y."/>
            <person name="Gill J.E."/>
            <person name="Goldsmith A.D."/>
            <person name="Haas B."/>
            <person name="Hansen N.F."/>
            <person name="Hughes B."/>
            <person name="Huizar L."/>
            <person name="Hunter J.L."/>
            <person name="Jenkins J."/>
            <person name="Johnson-Hopson C."/>
            <person name="Khan S."/>
            <person name="Khaykin E."/>
            <person name="Kim C.J."/>
            <person name="Koo H.L."/>
            <person name="Kremenetskaia I."/>
            <person name="Kurtz D.B."/>
            <person name="Kwan A."/>
            <person name="Lam B."/>
            <person name="Langin-Hooper S."/>
            <person name="Lee A."/>
            <person name="Lee J.M."/>
            <person name="Lenz C.A."/>
            <person name="Li J.H."/>
            <person name="Li Y.-P."/>
            <person name="Lin X."/>
            <person name="Liu S.X."/>
            <person name="Liu Z.A."/>
            <person name="Luros J.S."/>
            <person name="Maiti R."/>
            <person name="Marziali A."/>
            <person name="Militscher J."/>
            <person name="Miranda M."/>
            <person name="Nguyen M."/>
            <person name="Nierman W.C."/>
            <person name="Osborne B.I."/>
            <person name="Pai G."/>
            <person name="Peterson J."/>
            <person name="Pham P.K."/>
            <person name="Rizzo M."/>
            <person name="Rooney T."/>
            <person name="Rowley D."/>
            <person name="Sakano H."/>
            <person name="Salzberg S.L."/>
            <person name="Schwartz J.R."/>
            <person name="Shinn P."/>
            <person name="Southwick A.M."/>
            <person name="Sun H."/>
            <person name="Tallon L.J."/>
            <person name="Tambunga G."/>
            <person name="Toriumi M.J."/>
            <person name="Town C.D."/>
            <person name="Utterback T."/>
            <person name="Van Aken S."/>
            <person name="Vaysberg M."/>
            <person name="Vysotskaia V.S."/>
            <person name="Walker M."/>
            <person name="Wu D."/>
            <person name="Yu G."/>
            <person name="Fraser C.M."/>
            <person name="Venter J.C."/>
            <person name="Davis R.W."/>
        </authorList>
    </citation>
    <scope>NUCLEOTIDE SEQUENCE [LARGE SCALE GENOMIC DNA]</scope>
    <source>
        <strain>cv. Columbia</strain>
    </source>
</reference>
<reference key="2">
    <citation type="journal article" date="2017" name="Plant J.">
        <title>Araport11: a complete reannotation of the Arabidopsis thaliana reference genome.</title>
        <authorList>
            <person name="Cheng C.Y."/>
            <person name="Krishnakumar V."/>
            <person name="Chan A.P."/>
            <person name="Thibaud-Nissen F."/>
            <person name="Schobel S."/>
            <person name="Town C.D."/>
        </authorList>
    </citation>
    <scope>GENOME REANNOTATION</scope>
    <source>
        <strain>cv. Columbia</strain>
    </source>
</reference>
<reference key="3">
    <citation type="journal article" date="2007" name="Plant J.">
        <title>Identification of a flavin-monooxygenase as the S-oxygenating enzyme in aliphatic glucosinolate biosynthesis in Arabidopsis.</title>
        <authorList>
            <person name="Hansen B.G."/>
            <person name="Kliebenstein D.J."/>
            <person name="Halkier B.A."/>
        </authorList>
    </citation>
    <scope>GENE FAMILY</scope>
    <source>
        <strain>cv. Columbia</strain>
    </source>
</reference>
<proteinExistence type="uncertain"/>
<sequence length="168" mass="18768">MAPSLSPIRSHHVAVIGAGAAGLVAARELRREGHSVVVFERQKQVGGTWIYTDHIEPDPLSVDPTRSVVHSSVYGSLRTNLPRECMGYRDFPFVVRSGVSESRDPRRFPSHGEVLAYLQDFAKEFAIEEMIRFDTAVVKVAPAAEEGSGKWRIESTEKEKKKWAHRAV</sequence>
<comment type="function">
    <text evidence="1">Catalyzes the conversion of methylthioalkyl glucosinolates of any chain length into methylsulfinylalkyl glucosinolates.</text>
</comment>
<comment type="cofactor">
    <cofactor evidence="1">
        <name>FAD</name>
        <dbReference type="ChEBI" id="CHEBI:57692"/>
    </cofactor>
</comment>
<comment type="similarity">
    <text evidence="3">Belongs to the FMO family.</text>
</comment>
<comment type="caution">
    <text evidence="3">Could be the product of a pseudogene. Lacks the C-terminal part of the protein containing the NADP-binding domain, which is a conserved feature of the family.</text>
</comment>
<feature type="chain" id="PRO_0000401966" description="Putative flavin-containing monooxygenase FMO GS-OX-like 11">
    <location>
        <begin position="1"/>
        <end position="168"/>
    </location>
</feature>
<feature type="binding site" evidence="2">
    <location>
        <begin position="17"/>
        <end position="22"/>
    </location>
    <ligand>
        <name>FAD</name>
        <dbReference type="ChEBI" id="CHEBI:57692"/>
    </ligand>
</feature>